<comment type="function">
    <text evidence="2">Binds to sialic acid-containing receptors on the cell surface, bringing about the attachment of the virus particle to the cell. This attachment induces virion internalization either through clathrin-dependent endocytosis or through clathrin- and caveolin-independent pathway. Plays a major role in the determination of host range restriction and virulence. Class I viral fusion protein. Responsible for penetration of the virus into the cell cytoplasm by mediating the fusion of the membrane of the endocytosed virus particle with the endosomal membrane. Low pH in endosomes induces an irreversible conformational change in HA2, releasing the fusion hydrophobic peptide. Several trimers are required to form a competent fusion pore.</text>
</comment>
<comment type="subunit">
    <text evidence="1">Homotrimer of disulfide-linked HA1-HA2. Interacts with human CACNA1C.</text>
</comment>
<comment type="subcellular location">
    <subcellularLocation>
        <location evidence="2">Virion membrane</location>
        <topology evidence="2">Single-pass type I membrane protein</topology>
    </subcellularLocation>
    <subcellularLocation>
        <location evidence="2">Host apical cell membrane</location>
        <topology evidence="2">Single-pass type I membrane protein</topology>
    </subcellularLocation>
    <text evidence="2">Targeted to the apical plasma membrane in epithelial polarized cells through a signal present in the transmembrane domain. Associated with glycosphingolipid- and cholesterol-enriched detergent-resistant lipid rafts.</text>
</comment>
<comment type="PTM">
    <text evidence="2">Palmitoylated.</text>
</comment>
<comment type="PTM">
    <text evidence="2">In natural infection, inactive HA is matured into HA1 and HA2 outside the cell by one or more trypsin-like, arginine-specific endoprotease secreted by the bronchial epithelial cells. One identified protease that may be involved in this process is secreted in lungs by club cells.</text>
</comment>
<comment type="miscellaneous">
    <text>Major glycoprotein, comprises over 80% of the envelope proteins present in virus particle.</text>
</comment>
<comment type="miscellaneous">
    <text>The extent of infection into host organism is determined by HA. Influenza viruses bud from the apical surface of polarized epithelial cells (e.g. bronchial epithelial cells) into lumen of lungs and are therefore usually pneumotropic. The reason is that HA is cleaved by tryptase clara which is restricted to lungs. However, HAs of H5 and H7 pantropic avian viruses subtypes can be cleaved by furin and subtilisin-type enzymes, allowing the virus to grow in other organs than lungs.</text>
</comment>
<comment type="miscellaneous">
    <text evidence="3">The influenza A genome consist of 8 RNA segments. Genetic variation of hemagglutinin and/or neuraminidase genes results in the emergence of new influenza strains. The mechanism of variation can be the result of point mutations or the result of genetic reassortment between segments of two different strains.</text>
</comment>
<comment type="similarity">
    <text evidence="2">Belongs to the influenza viruses hemagglutinin family.</text>
</comment>
<proteinExistence type="inferred from homology"/>
<name>HEMA_I07A0</name>
<protein>
    <recommendedName>
        <fullName evidence="2">Hemagglutinin</fullName>
    </recommendedName>
    <component>
        <recommendedName>
            <fullName evidence="2">Hemagglutinin HA1 chain</fullName>
        </recommendedName>
    </component>
    <component>
        <recommendedName>
            <fullName evidence="2">Hemagglutinin HA2 chain</fullName>
        </recommendedName>
    </component>
</protein>
<gene>
    <name evidence="2" type="primary">HA</name>
</gene>
<accession>A8C8J4</accession>
<sequence>MKVKLLVLLCTFTATYADTICIGYHANNSTDTVDTVLEKNVTVTHSVNLLEDSHNGKLCLLKGIAPLQLGNCSVAGWILGNPECELLISKESWSYIVETPNPENGTCYPGYFADYEELREQLSSVSSFERFEIFPKESSWPNHTVTGVSASCSHNGESSFYRNLLWLTGKNGLYPNLSKSYANNKEKEVLVLWGVHHPPNIGDQRALYHTENAYVSVVSSHYSRRFTPEIAKRPKVRDQEGRINYYWTLLEPGDTIIFEANGNLIAPRFAFALSRGFGSGIITSNAPMDKCDAKCQTPQGAINSSLPFQNVHPVTIGECPKYVRSTKLRMVTGLRNIPSIQSRGLFGAIAGFIEGGWTGMVDGWYGYHHQNEQGSGYAADQKSTQNAINGITNKVNSVIEKMNTQFTAVGKEFNKLERRMENLNKKVDDGFLDIWTYNAELLVLLENERTLDFHDSNVKNLYEKVKSQLKNNAKEIGNGCFEFYHKCNDECMESVKNGTYDYPKYSEESKLNREKIDGVKLESMGVYQILAIYSTVASSLVLLVSLGAISFWMCSNGSLQCRICI</sequence>
<organismHost>
    <name type="scientific">Aves</name>
    <dbReference type="NCBI Taxonomy" id="8782"/>
</organismHost>
<organismHost>
    <name type="scientific">Homo sapiens</name>
    <name type="common">Human</name>
    <dbReference type="NCBI Taxonomy" id="9606"/>
</organismHost>
<organismHost>
    <name type="scientific">Sus scrofa</name>
    <name type="common">Pig</name>
    <dbReference type="NCBI Taxonomy" id="9823"/>
</organismHost>
<dbReference type="EMBL" id="CY026211">
    <property type="protein sequence ID" value="ABV45926.1"/>
    <property type="molecule type" value="Viral_cRNA"/>
</dbReference>
<dbReference type="SMR" id="A8C8J4"/>
<dbReference type="GlyCosmos" id="A8C8J4">
    <property type="glycosylation" value="9 sites, No reported glycans"/>
</dbReference>
<dbReference type="Proteomes" id="UP001395887">
    <property type="component" value="Genome"/>
</dbReference>
<dbReference type="GO" id="GO:0020002">
    <property type="term" value="C:host cell plasma membrane"/>
    <property type="evidence" value="ECO:0007669"/>
    <property type="project" value="UniProtKB-SubCell"/>
</dbReference>
<dbReference type="GO" id="GO:0016020">
    <property type="term" value="C:membrane"/>
    <property type="evidence" value="ECO:0007669"/>
    <property type="project" value="UniProtKB-UniRule"/>
</dbReference>
<dbReference type="GO" id="GO:0019031">
    <property type="term" value="C:viral envelope"/>
    <property type="evidence" value="ECO:0007669"/>
    <property type="project" value="UniProtKB-UniRule"/>
</dbReference>
<dbReference type="GO" id="GO:0055036">
    <property type="term" value="C:virion membrane"/>
    <property type="evidence" value="ECO:0007669"/>
    <property type="project" value="UniProtKB-SubCell"/>
</dbReference>
<dbReference type="GO" id="GO:0046789">
    <property type="term" value="F:host cell surface receptor binding"/>
    <property type="evidence" value="ECO:0007669"/>
    <property type="project" value="UniProtKB-UniRule"/>
</dbReference>
<dbReference type="GO" id="GO:0075512">
    <property type="term" value="P:clathrin-dependent endocytosis of virus by host cell"/>
    <property type="evidence" value="ECO:0007669"/>
    <property type="project" value="UniProtKB-UniRule"/>
</dbReference>
<dbReference type="GO" id="GO:0039654">
    <property type="term" value="P:fusion of virus membrane with host endosome membrane"/>
    <property type="evidence" value="ECO:0007669"/>
    <property type="project" value="UniProtKB-UniRule"/>
</dbReference>
<dbReference type="GO" id="GO:0019064">
    <property type="term" value="P:fusion of virus membrane with host plasma membrane"/>
    <property type="evidence" value="ECO:0007669"/>
    <property type="project" value="InterPro"/>
</dbReference>
<dbReference type="GO" id="GO:0046761">
    <property type="term" value="P:viral budding from plasma membrane"/>
    <property type="evidence" value="ECO:0007669"/>
    <property type="project" value="UniProtKB-UniRule"/>
</dbReference>
<dbReference type="GO" id="GO:0019062">
    <property type="term" value="P:virion attachment to host cell"/>
    <property type="evidence" value="ECO:0007669"/>
    <property type="project" value="UniProtKB-KW"/>
</dbReference>
<dbReference type="FunFam" id="3.90.20.10:FF:000002">
    <property type="entry name" value="Hemagglutinin"/>
    <property type="match status" value="1"/>
</dbReference>
<dbReference type="Gene3D" id="3.90.20.10">
    <property type="match status" value="1"/>
</dbReference>
<dbReference type="Gene3D" id="3.90.209.20">
    <property type="match status" value="1"/>
</dbReference>
<dbReference type="HAMAP" id="MF_04072">
    <property type="entry name" value="INFV_HEMA"/>
    <property type="match status" value="1"/>
</dbReference>
<dbReference type="InterPro" id="IPR008980">
    <property type="entry name" value="Capsid_hemagglutn"/>
</dbReference>
<dbReference type="InterPro" id="IPR013828">
    <property type="entry name" value="Hemagglutn_HA1_a/b_dom_sf"/>
</dbReference>
<dbReference type="InterPro" id="IPR000149">
    <property type="entry name" value="Hemagglutn_influenz_A"/>
</dbReference>
<dbReference type="InterPro" id="IPR001364">
    <property type="entry name" value="Hemagglutn_influenz_A/B"/>
</dbReference>
<dbReference type="Pfam" id="PF00509">
    <property type="entry name" value="Hemagglutinin"/>
    <property type="match status" value="1"/>
</dbReference>
<dbReference type="PRINTS" id="PR00330">
    <property type="entry name" value="HEMAGGLUTN1"/>
</dbReference>
<dbReference type="PRINTS" id="PR00329">
    <property type="entry name" value="HEMAGGLUTN12"/>
</dbReference>
<dbReference type="SUPFAM" id="SSF58064">
    <property type="entry name" value="Influenza hemagglutinin (stalk)"/>
    <property type="match status" value="1"/>
</dbReference>
<dbReference type="SUPFAM" id="SSF49818">
    <property type="entry name" value="Viral protein domain"/>
    <property type="match status" value="1"/>
</dbReference>
<keyword id="KW-1167">Clathrin- and caveolin-independent endocytosis of virus by host</keyword>
<keyword id="KW-1165">Clathrin-mediated endocytosis of virus by host</keyword>
<keyword id="KW-1015">Disulfide bond</keyword>
<keyword id="KW-1170">Fusion of virus membrane with host endosomal membrane</keyword>
<keyword id="KW-1168">Fusion of virus membrane with host membrane</keyword>
<keyword id="KW-0325">Glycoprotein</keyword>
<keyword id="KW-0348">Hemagglutinin</keyword>
<keyword id="KW-1032">Host cell membrane</keyword>
<keyword id="KW-1043">Host membrane</keyword>
<keyword id="KW-0945">Host-virus interaction</keyword>
<keyword id="KW-0449">Lipoprotein</keyword>
<keyword id="KW-0472">Membrane</keyword>
<keyword id="KW-0564">Palmitate</keyword>
<keyword id="KW-0732">Signal</keyword>
<keyword id="KW-0812">Transmembrane</keyword>
<keyword id="KW-1133">Transmembrane helix</keyword>
<keyword id="KW-1161">Viral attachment to host cell</keyword>
<keyword id="KW-0261">Viral envelope protein</keyword>
<keyword id="KW-1162">Viral penetration into host cytoplasm</keyword>
<keyword id="KW-0946">Virion</keyword>
<keyword id="KW-1164">Virus endocytosis by host</keyword>
<keyword id="KW-1160">Virus entry into host cell</keyword>
<evidence type="ECO:0000250" key="1">
    <source>
        <dbReference type="UniProtKB" id="Q289M7"/>
    </source>
</evidence>
<evidence type="ECO:0000255" key="2">
    <source>
        <dbReference type="HAMAP-Rule" id="MF_04072"/>
    </source>
</evidence>
<evidence type="ECO:0000305" key="3"/>
<feature type="signal peptide" evidence="2">
    <location>
        <begin position="1"/>
        <end position="17"/>
    </location>
</feature>
<feature type="chain" id="PRO_0000440371" description="Hemagglutinin" evidence="2">
    <location>
        <begin position="18"/>
        <end position="565"/>
    </location>
</feature>
<feature type="chain" id="PRO_0000372871" description="Hemagglutinin HA1 chain" evidence="2">
    <location>
        <begin position="18"/>
        <end position="342"/>
    </location>
</feature>
<feature type="chain" id="PRO_0000372872" description="Hemagglutinin HA2 chain" evidence="2">
    <location>
        <begin position="344"/>
        <end position="565"/>
    </location>
</feature>
<feature type="topological domain" description="Extracellular" evidence="2">
    <location>
        <begin position="18"/>
        <end position="528"/>
    </location>
</feature>
<feature type="transmembrane region" description="Helical" evidence="2">
    <location>
        <begin position="529"/>
        <end position="549"/>
    </location>
</feature>
<feature type="topological domain" description="Cytoplasmic" evidence="2">
    <location>
        <begin position="550"/>
        <end position="565"/>
    </location>
</feature>
<feature type="site" description="Cleavage; by host" evidence="2">
    <location>
        <begin position="343"/>
        <end position="344"/>
    </location>
</feature>
<feature type="lipid moiety-binding region" description="S-palmitoyl cysteine; by host" evidence="2">
    <location>
        <position position="554"/>
    </location>
</feature>
<feature type="lipid moiety-binding region" description="S-palmitoyl cysteine; by host" evidence="2">
    <location>
        <position position="561"/>
    </location>
</feature>
<feature type="lipid moiety-binding region" description="S-palmitoyl cysteine; by host" evidence="2">
    <location>
        <position position="564"/>
    </location>
</feature>
<feature type="glycosylation site" description="N-linked (GlcNAc...) asparagine; by host" evidence="2">
    <location>
        <position position="27"/>
    </location>
</feature>
<feature type="glycosylation site" description="N-linked (GlcNAc...) asparagine; by host" evidence="2">
    <location>
        <position position="28"/>
    </location>
</feature>
<feature type="glycosylation site" description="N-linked (GlcNAc...) asparagine; by host" evidence="2">
    <location>
        <position position="40"/>
    </location>
</feature>
<feature type="glycosylation site" description="N-linked (GlcNAc...) asparagine; by host" evidence="2">
    <location>
        <position position="71"/>
    </location>
</feature>
<feature type="glycosylation site" description="N-linked (GlcNAc...) asparagine; by host" evidence="2">
    <location>
        <position position="104"/>
    </location>
</feature>
<feature type="glycosylation site" description="N-linked (GlcNAc...) asparagine; by host" evidence="2">
    <location>
        <position position="142"/>
    </location>
</feature>
<feature type="glycosylation site" description="N-linked (GlcNAc...) asparagine; by host" evidence="2">
    <location>
        <position position="176"/>
    </location>
</feature>
<feature type="glycosylation site" description="N-linked (GlcNAc...) asparagine; by host" evidence="2">
    <location>
        <position position="303"/>
    </location>
</feature>
<feature type="glycosylation site" description="N-linked (GlcNAc...) asparagine; by host" evidence="2">
    <location>
        <position position="497"/>
    </location>
</feature>
<feature type="disulfide bond" description="Interchain (between HA1 and HA2 chains)" evidence="2">
    <location>
        <begin position="21"/>
        <end position="480"/>
    </location>
</feature>
<feature type="disulfide bond" evidence="2">
    <location>
        <begin position="59"/>
        <end position="291"/>
    </location>
</feature>
<feature type="disulfide bond" evidence="2">
    <location>
        <begin position="72"/>
        <end position="84"/>
    </location>
</feature>
<feature type="disulfide bond" evidence="2">
    <location>
        <begin position="107"/>
        <end position="152"/>
    </location>
</feature>
<feature type="disulfide bond" evidence="2">
    <location>
        <begin position="295"/>
        <end position="319"/>
    </location>
</feature>
<feature type="disulfide bond" evidence="2">
    <location>
        <begin position="487"/>
        <end position="491"/>
    </location>
</feature>
<organism>
    <name type="scientific">Influenza A virus (strain A/USA:Texas/UR06-0195/2007 H1N1)</name>
    <dbReference type="NCBI Taxonomy" id="455880"/>
    <lineage>
        <taxon>Viruses</taxon>
        <taxon>Riboviria</taxon>
        <taxon>Orthornavirae</taxon>
        <taxon>Negarnaviricota</taxon>
        <taxon>Polyploviricotina</taxon>
        <taxon>Insthoviricetes</taxon>
        <taxon>Articulavirales</taxon>
        <taxon>Orthomyxoviridae</taxon>
        <taxon>Alphainfluenzavirus</taxon>
        <taxon>Alphainfluenzavirus influenzae</taxon>
        <taxon>Influenza A virus</taxon>
    </lineage>
</organism>
<reference key="1">
    <citation type="submission" date="2007-09" db="EMBL/GenBank/DDBJ databases">
        <title>The NIAID influenza genome sequencing project.</title>
        <authorList>
            <person name="Spiro D."/>
            <person name="Sengamalay N."/>
            <person name="Boyne A."/>
            <person name="Bera J."/>
            <person name="Zaborsky J."/>
            <person name="Subbu V."/>
            <person name="Sparenborg J."/>
            <person name="Gallagher T."/>
            <person name="Overton L."/>
            <person name="Althoff R."/>
            <person name="Liu X."/>
            <person name="Ghedin E."/>
            <person name="Sitz J."/>
            <person name="Katzel D."/>
            <person name="Neupane R."/>
            <person name="Shumway M."/>
            <person name="Koo H."/>
            <person name="Edelman L."/>
            <person name="Menegus M."/>
            <person name="Mayer C."/>
            <person name="Dale S."/>
            <person name="Bao Y."/>
            <person name="Bolotov P."/>
            <person name="Dernovoy D."/>
            <person name="Kiryutin B."/>
            <person name="Lipman D.J."/>
            <person name="Tatusova T."/>
        </authorList>
    </citation>
    <scope>NUCLEOTIDE SEQUENCE [GENOMIC RNA]</scope>
</reference>
<reference key="2">
    <citation type="submission" date="2007-09" db="EMBL/GenBank/DDBJ databases">
        <authorList>
            <consortium name="The NIAID Influenza Genome Sequencing Consortium"/>
        </authorList>
    </citation>
    <scope>NUCLEOTIDE SEQUENCE [GENOMIC RNA]</scope>
</reference>